<accession>A7ZNW5</accession>
<reference key="1">
    <citation type="journal article" date="2008" name="J. Bacteriol.">
        <title>The pangenome structure of Escherichia coli: comparative genomic analysis of E. coli commensal and pathogenic isolates.</title>
        <authorList>
            <person name="Rasko D.A."/>
            <person name="Rosovitz M.J."/>
            <person name="Myers G.S.A."/>
            <person name="Mongodin E.F."/>
            <person name="Fricke W.F."/>
            <person name="Gajer P."/>
            <person name="Crabtree J."/>
            <person name="Sebaihia M."/>
            <person name="Thomson N.R."/>
            <person name="Chaudhuri R."/>
            <person name="Henderson I.R."/>
            <person name="Sperandio V."/>
            <person name="Ravel J."/>
        </authorList>
    </citation>
    <scope>NUCLEOTIDE SEQUENCE [LARGE SCALE GENOMIC DNA]</scope>
    <source>
        <strain>E24377A / ETEC</strain>
    </source>
</reference>
<sequence length="294" mass="31526">MHPRFQTAFAQLADNLQSALEPILADKYFPALLTGEQVSSLKSATGLDEDALAFALLPLAAACARTPLSNFNVGAIARGVSGTWYFGANMEFIGATMQQTVHAEQSAISHAWLSGEKALAAITVNYTPCGHCRQFMNELNSGLDLRIHLPGREAHALRDYLPDAFGPKDLEIKTLLMDEQDHGYALTGDALSQAAIAAANRSHMPYSKSPSGVALECKDGRIFSGSYAENAAFNPTLPPLQGALILLNLKGYDYPDIQRAVLAENADAPLIQWDATSATLKALGCHSIDRVLLA</sequence>
<gene>
    <name evidence="1" type="primary">cdd</name>
    <name type="ordered locus">EcE24377A_2438</name>
</gene>
<keyword id="KW-0378">Hydrolase</keyword>
<keyword id="KW-0479">Metal-binding</keyword>
<keyword id="KW-1185">Reference proteome</keyword>
<keyword id="KW-0862">Zinc</keyword>
<comment type="function">
    <text evidence="1">This enzyme scavenges exogenous and endogenous cytidine and 2'-deoxycytidine for UMP synthesis.</text>
</comment>
<comment type="catalytic activity">
    <reaction evidence="1">
        <text>cytidine + H2O + H(+) = uridine + NH4(+)</text>
        <dbReference type="Rhea" id="RHEA:16069"/>
        <dbReference type="ChEBI" id="CHEBI:15377"/>
        <dbReference type="ChEBI" id="CHEBI:15378"/>
        <dbReference type="ChEBI" id="CHEBI:16704"/>
        <dbReference type="ChEBI" id="CHEBI:17562"/>
        <dbReference type="ChEBI" id="CHEBI:28938"/>
        <dbReference type="EC" id="3.5.4.5"/>
    </reaction>
</comment>
<comment type="catalytic activity">
    <reaction evidence="1">
        <text>2'-deoxycytidine + H2O + H(+) = 2'-deoxyuridine + NH4(+)</text>
        <dbReference type="Rhea" id="RHEA:13433"/>
        <dbReference type="ChEBI" id="CHEBI:15377"/>
        <dbReference type="ChEBI" id="CHEBI:15378"/>
        <dbReference type="ChEBI" id="CHEBI:15698"/>
        <dbReference type="ChEBI" id="CHEBI:16450"/>
        <dbReference type="ChEBI" id="CHEBI:28938"/>
        <dbReference type="EC" id="3.5.4.5"/>
    </reaction>
</comment>
<comment type="cofactor">
    <cofactor evidence="1">
        <name>Zn(2+)</name>
        <dbReference type="ChEBI" id="CHEBI:29105"/>
    </cofactor>
    <text evidence="1">Binds 1 zinc ion.</text>
</comment>
<comment type="subunit">
    <text evidence="1">Homodimer.</text>
</comment>
<comment type="similarity">
    <text evidence="1">Belongs to the cytidine and deoxycytidylate deaminase family.</text>
</comment>
<protein>
    <recommendedName>
        <fullName evidence="1">Cytidine deaminase</fullName>
        <ecNumber evidence="1">3.5.4.5</ecNumber>
    </recommendedName>
    <alternativeName>
        <fullName evidence="1">Cytidine aminohydrolase</fullName>
        <shortName evidence="1">CDA</shortName>
    </alternativeName>
</protein>
<feature type="chain" id="PRO_1000068948" description="Cytidine deaminase">
    <location>
        <begin position="1"/>
        <end position="294"/>
    </location>
</feature>
<feature type="domain" description="CMP/dCMP-type deaminase 1" evidence="2">
    <location>
        <begin position="48"/>
        <end position="168"/>
    </location>
</feature>
<feature type="domain" description="CMP/dCMP-type deaminase 2" evidence="2">
    <location>
        <begin position="186"/>
        <end position="294"/>
    </location>
</feature>
<feature type="active site" description="Proton donor" evidence="1">
    <location>
        <position position="104"/>
    </location>
</feature>
<feature type="binding site" evidence="1">
    <location>
        <begin position="89"/>
        <end position="91"/>
    </location>
    <ligand>
        <name>substrate</name>
    </ligand>
</feature>
<feature type="binding site" evidence="1">
    <location>
        <position position="102"/>
    </location>
    <ligand>
        <name>Zn(2+)</name>
        <dbReference type="ChEBI" id="CHEBI:29105"/>
        <note>catalytic</note>
    </ligand>
</feature>
<feature type="binding site" evidence="1">
    <location>
        <position position="129"/>
    </location>
    <ligand>
        <name>Zn(2+)</name>
        <dbReference type="ChEBI" id="CHEBI:29105"/>
        <note>catalytic</note>
    </ligand>
</feature>
<feature type="binding site" evidence="1">
    <location>
        <position position="132"/>
    </location>
    <ligand>
        <name>Zn(2+)</name>
        <dbReference type="ChEBI" id="CHEBI:29105"/>
        <note>catalytic</note>
    </ligand>
</feature>
<proteinExistence type="inferred from homology"/>
<evidence type="ECO:0000255" key="1">
    <source>
        <dbReference type="HAMAP-Rule" id="MF_01558"/>
    </source>
</evidence>
<evidence type="ECO:0000255" key="2">
    <source>
        <dbReference type="PROSITE-ProRule" id="PRU01083"/>
    </source>
</evidence>
<name>CDD_ECO24</name>
<dbReference type="EC" id="3.5.4.5" evidence="1"/>
<dbReference type="EMBL" id="CP000800">
    <property type="protein sequence ID" value="ABV17857.1"/>
    <property type="molecule type" value="Genomic_DNA"/>
</dbReference>
<dbReference type="RefSeq" id="WP_000553559.1">
    <property type="nucleotide sequence ID" value="NC_009801.1"/>
</dbReference>
<dbReference type="SMR" id="A7ZNW5"/>
<dbReference type="GeneID" id="75206396"/>
<dbReference type="KEGG" id="ecw:EcE24377A_2438"/>
<dbReference type="HOGENOM" id="CLU_052424_0_0_6"/>
<dbReference type="Proteomes" id="UP000001122">
    <property type="component" value="Chromosome"/>
</dbReference>
<dbReference type="GO" id="GO:0005829">
    <property type="term" value="C:cytosol"/>
    <property type="evidence" value="ECO:0007669"/>
    <property type="project" value="TreeGrafter"/>
</dbReference>
<dbReference type="GO" id="GO:0004126">
    <property type="term" value="F:cytidine deaminase activity"/>
    <property type="evidence" value="ECO:0007669"/>
    <property type="project" value="UniProtKB-UniRule"/>
</dbReference>
<dbReference type="GO" id="GO:0042802">
    <property type="term" value="F:identical protein binding"/>
    <property type="evidence" value="ECO:0007669"/>
    <property type="project" value="UniProtKB-ARBA"/>
</dbReference>
<dbReference type="GO" id="GO:0008270">
    <property type="term" value="F:zinc ion binding"/>
    <property type="evidence" value="ECO:0007669"/>
    <property type="project" value="UniProtKB-UniRule"/>
</dbReference>
<dbReference type="GO" id="GO:0009972">
    <property type="term" value="P:cytidine deamination"/>
    <property type="evidence" value="ECO:0007669"/>
    <property type="project" value="InterPro"/>
</dbReference>
<dbReference type="CDD" id="cd01283">
    <property type="entry name" value="cytidine_deaminase"/>
    <property type="match status" value="2"/>
</dbReference>
<dbReference type="FunFam" id="3.40.140.10:FF:000006">
    <property type="entry name" value="Cytidine deaminase"/>
    <property type="match status" value="1"/>
</dbReference>
<dbReference type="FunFam" id="3.40.140.10:FF:000007">
    <property type="entry name" value="Cytidine deaminase"/>
    <property type="match status" value="1"/>
</dbReference>
<dbReference type="Gene3D" id="3.40.140.10">
    <property type="entry name" value="Cytidine Deaminase, domain 2"/>
    <property type="match status" value="2"/>
</dbReference>
<dbReference type="HAMAP" id="MF_01558">
    <property type="entry name" value="Cyt_deam"/>
    <property type="match status" value="1"/>
</dbReference>
<dbReference type="InterPro" id="IPR016192">
    <property type="entry name" value="APOBEC/CMP_deaminase_Zn-bd"/>
</dbReference>
<dbReference type="InterPro" id="IPR002125">
    <property type="entry name" value="CMP_dCMP_dom"/>
</dbReference>
<dbReference type="InterPro" id="IPR013171">
    <property type="entry name" value="Cyd/dCyd_deaminase_Zn-bd"/>
</dbReference>
<dbReference type="InterPro" id="IPR050202">
    <property type="entry name" value="Cyt/Deoxycyt_deaminase"/>
</dbReference>
<dbReference type="InterPro" id="IPR006263">
    <property type="entry name" value="Cyt_deam_dimer"/>
</dbReference>
<dbReference type="InterPro" id="IPR016193">
    <property type="entry name" value="Cytidine_deaminase-like"/>
</dbReference>
<dbReference type="InterPro" id="IPR020797">
    <property type="entry name" value="Cytidine_deaminase_bacteria"/>
</dbReference>
<dbReference type="NCBIfam" id="TIGR01355">
    <property type="entry name" value="cyt_deam_dimer"/>
    <property type="match status" value="1"/>
</dbReference>
<dbReference type="NCBIfam" id="NF006537">
    <property type="entry name" value="PRK09027.1"/>
    <property type="match status" value="1"/>
</dbReference>
<dbReference type="PANTHER" id="PTHR11644">
    <property type="entry name" value="CYTIDINE DEAMINASE"/>
    <property type="match status" value="1"/>
</dbReference>
<dbReference type="PANTHER" id="PTHR11644:SF2">
    <property type="entry name" value="CYTIDINE DEAMINASE"/>
    <property type="match status" value="1"/>
</dbReference>
<dbReference type="Pfam" id="PF00383">
    <property type="entry name" value="dCMP_cyt_deam_1"/>
    <property type="match status" value="1"/>
</dbReference>
<dbReference type="Pfam" id="PF08211">
    <property type="entry name" value="dCMP_cyt_deam_2"/>
    <property type="match status" value="1"/>
</dbReference>
<dbReference type="PIRSF" id="PIRSF006334">
    <property type="entry name" value="Cdd_plus_pseudo"/>
    <property type="match status" value="1"/>
</dbReference>
<dbReference type="SUPFAM" id="SSF53927">
    <property type="entry name" value="Cytidine deaminase-like"/>
    <property type="match status" value="2"/>
</dbReference>
<dbReference type="PROSITE" id="PS00903">
    <property type="entry name" value="CYT_DCMP_DEAMINASES_1"/>
    <property type="match status" value="1"/>
</dbReference>
<dbReference type="PROSITE" id="PS51747">
    <property type="entry name" value="CYT_DCMP_DEAMINASES_2"/>
    <property type="match status" value="2"/>
</dbReference>
<organism>
    <name type="scientific">Escherichia coli O139:H28 (strain E24377A / ETEC)</name>
    <dbReference type="NCBI Taxonomy" id="331111"/>
    <lineage>
        <taxon>Bacteria</taxon>
        <taxon>Pseudomonadati</taxon>
        <taxon>Pseudomonadota</taxon>
        <taxon>Gammaproteobacteria</taxon>
        <taxon>Enterobacterales</taxon>
        <taxon>Enterobacteriaceae</taxon>
        <taxon>Escherichia</taxon>
    </lineage>
</organism>